<protein>
    <recommendedName>
        <fullName>Ribose-phosphate pyrophosphokinase 1</fullName>
        <ecNumber>2.7.6.1</ecNumber>
    </recommendedName>
    <alternativeName>
        <fullName>Phosphoribosyl pyrophosphate synthase I</fullName>
        <shortName>PRS-I</shortName>
    </alternativeName>
</protein>
<feature type="chain" id="PRO_0000141072" description="Ribose-phosphate pyrophosphokinase 1">
    <location>
        <begin position="1"/>
        <end position="318"/>
    </location>
</feature>
<feature type="region of interest" description="Binding of phosphoribosylpyrophosphate" evidence="2">
    <location>
        <begin position="212"/>
        <end position="227"/>
    </location>
</feature>
<feature type="binding site" evidence="1">
    <location>
        <begin position="96"/>
        <end position="101"/>
    </location>
    <ligand>
        <name>ATP</name>
        <dbReference type="ChEBI" id="CHEBI:30616"/>
    </ligand>
</feature>
<feature type="binding site" evidence="2">
    <location>
        <position position="128"/>
    </location>
    <ligand>
        <name>Mg(2+)</name>
        <dbReference type="ChEBI" id="CHEBI:18420"/>
    </ligand>
</feature>
<feature type="binding site" evidence="1">
    <location>
        <position position="130"/>
    </location>
    <ligand>
        <name>ATP</name>
        <dbReference type="ChEBI" id="CHEBI:30616"/>
    </ligand>
</feature>
<feature type="binding site" evidence="2">
    <location>
        <position position="130"/>
    </location>
    <ligand>
        <name>Mg(2+)</name>
        <dbReference type="ChEBI" id="CHEBI:18420"/>
    </ligand>
</feature>
<feature type="binding site" evidence="2">
    <location>
        <position position="139"/>
    </location>
    <ligand>
        <name>Mg(2+)</name>
        <dbReference type="ChEBI" id="CHEBI:18420"/>
    </ligand>
</feature>
<feature type="binding site" evidence="2">
    <location>
        <position position="143"/>
    </location>
    <ligand>
        <name>Mg(2+)</name>
        <dbReference type="ChEBI" id="CHEBI:18420"/>
    </ligand>
</feature>
<feature type="sequence conflict" description="In Ref. 2; BAB26181." evidence="4" ref="2">
    <original>D</original>
    <variation>E</variation>
    <location>
        <position position="183"/>
    </location>
</feature>
<name>PRPS1_MOUSE</name>
<proteinExistence type="evidence at protein level"/>
<sequence length="318" mass="34834">MPNIKIFSGSSHQDLSQKIADRLGLELGKVVTKKFSNQETCVEIGESVRGEDVYIVQSGCGEINDNLMELLIMINACKIASASRVTAVIPCFPYARQDKKDKSRAPISAKLVANMLSVAGADHIITMDLHASQIQGFFDIPVDNLYAEPAVLKWIRENISEWRNCTIVSPDAGGAKRVTSIADRLNVDFALIHKERKKANEVDRMVLVGDVKDRVAILVDDMADTCGTICHAADKLLSAGATRVYAILTHGIFSGPAISRINNACFEAVVVTNTIPQEDKMKHCSKIQVIDISMILAEAIRRTHNGESVSYLFSHVPL</sequence>
<organism>
    <name type="scientific">Mus musculus</name>
    <name type="common">Mouse</name>
    <dbReference type="NCBI Taxonomy" id="10090"/>
    <lineage>
        <taxon>Eukaryota</taxon>
        <taxon>Metazoa</taxon>
        <taxon>Chordata</taxon>
        <taxon>Craniata</taxon>
        <taxon>Vertebrata</taxon>
        <taxon>Euteleostomi</taxon>
        <taxon>Mammalia</taxon>
        <taxon>Eutheria</taxon>
        <taxon>Euarchontoglires</taxon>
        <taxon>Glires</taxon>
        <taxon>Rodentia</taxon>
        <taxon>Myomorpha</taxon>
        <taxon>Muroidea</taxon>
        <taxon>Muridae</taxon>
        <taxon>Murinae</taxon>
        <taxon>Mus</taxon>
        <taxon>Mus</taxon>
    </lineage>
</organism>
<gene>
    <name type="primary">Prps1</name>
</gene>
<evidence type="ECO:0000250" key="1"/>
<evidence type="ECO:0000255" key="2"/>
<evidence type="ECO:0000269" key="3">
    <source>
    </source>
</evidence>
<evidence type="ECO:0000305" key="4"/>
<dbReference type="EC" id="2.7.6.1"/>
<dbReference type="EMBL" id="AB025048">
    <property type="protein sequence ID" value="BAA84686.1"/>
    <property type="molecule type" value="mRNA"/>
</dbReference>
<dbReference type="EMBL" id="AK009265">
    <property type="protein sequence ID" value="BAB26181.1"/>
    <property type="molecule type" value="mRNA"/>
</dbReference>
<dbReference type="EMBL" id="AK011304">
    <property type="protein sequence ID" value="BAB27530.1"/>
    <property type="molecule type" value="mRNA"/>
</dbReference>
<dbReference type="EMBL" id="AK089009">
    <property type="protein sequence ID" value="BAC40697.1"/>
    <property type="molecule type" value="mRNA"/>
</dbReference>
<dbReference type="EMBL" id="AK165524">
    <property type="protein sequence ID" value="BAE38237.1"/>
    <property type="molecule type" value="mRNA"/>
</dbReference>
<dbReference type="EMBL" id="AK165987">
    <property type="protein sequence ID" value="BAE38503.1"/>
    <property type="molecule type" value="mRNA"/>
</dbReference>
<dbReference type="EMBL" id="AK166856">
    <property type="protein sequence ID" value="BAE39073.1"/>
    <property type="molecule type" value="mRNA"/>
</dbReference>
<dbReference type="EMBL" id="AL672297">
    <property type="status" value="NOT_ANNOTATED_CDS"/>
    <property type="molecule type" value="Genomic_DNA"/>
</dbReference>
<dbReference type="EMBL" id="CH466616">
    <property type="protein sequence ID" value="EDL23928.1"/>
    <property type="molecule type" value="Genomic_DNA"/>
</dbReference>
<dbReference type="EMBL" id="CH466616">
    <property type="protein sequence ID" value="EDL23929.1"/>
    <property type="molecule type" value="Genomic_DNA"/>
</dbReference>
<dbReference type="EMBL" id="BC054772">
    <property type="protein sequence ID" value="AAH54772.1"/>
    <property type="molecule type" value="mRNA"/>
</dbReference>
<dbReference type="CCDS" id="CCDS30439.1"/>
<dbReference type="RefSeq" id="NP_067438.1">
    <property type="nucleotide sequence ID" value="NM_021463.4"/>
</dbReference>
<dbReference type="SMR" id="Q9D7G0"/>
<dbReference type="BioGRID" id="202401">
    <property type="interactions" value="19"/>
</dbReference>
<dbReference type="FunCoup" id="Q9D7G0">
    <property type="interactions" value="1386"/>
</dbReference>
<dbReference type="STRING" id="10090.ENSMUSP00000033809"/>
<dbReference type="GlyConnect" id="2686">
    <property type="glycosylation" value="2 N-Linked glycans (1 site)"/>
</dbReference>
<dbReference type="GlyCosmos" id="Q9D7G0">
    <property type="glycosylation" value="1 site, 2 glycans"/>
</dbReference>
<dbReference type="GlyGen" id="Q9D7G0">
    <property type="glycosylation" value="2 sites, 2 N-linked glycans (1 site), 1 O-linked glycan (1 site)"/>
</dbReference>
<dbReference type="iPTMnet" id="Q9D7G0"/>
<dbReference type="PhosphoSitePlus" id="Q9D7G0"/>
<dbReference type="SwissPalm" id="Q9D7G0"/>
<dbReference type="REPRODUCTION-2DPAGE" id="Q9D7G0"/>
<dbReference type="jPOST" id="Q9D7G0"/>
<dbReference type="PaxDb" id="10090-ENSMUSP00000033809"/>
<dbReference type="ProteomicsDB" id="291534"/>
<dbReference type="Pumba" id="Q9D7G0"/>
<dbReference type="DNASU" id="19139"/>
<dbReference type="Ensembl" id="ENSMUST00000033809.4">
    <property type="protein sequence ID" value="ENSMUSP00000033809.4"/>
    <property type="gene ID" value="ENSMUSG00000031432.4"/>
</dbReference>
<dbReference type="GeneID" id="19139"/>
<dbReference type="KEGG" id="mmu:19139"/>
<dbReference type="UCSC" id="uc009uky.2">
    <property type="organism name" value="mouse"/>
</dbReference>
<dbReference type="AGR" id="MGI:97775"/>
<dbReference type="CTD" id="5631"/>
<dbReference type="MGI" id="MGI:97775">
    <property type="gene designation" value="Prps1"/>
</dbReference>
<dbReference type="VEuPathDB" id="HostDB:ENSMUSG00000031432"/>
<dbReference type="eggNOG" id="KOG1448">
    <property type="taxonomic scope" value="Eukaryota"/>
</dbReference>
<dbReference type="GeneTree" id="ENSGT00950000182803"/>
<dbReference type="HOGENOM" id="CLU_033546_4_0_1"/>
<dbReference type="InParanoid" id="Q9D7G0"/>
<dbReference type="OMA" id="YFGWARQ"/>
<dbReference type="OrthoDB" id="413572at2759"/>
<dbReference type="PhylomeDB" id="Q9D7G0"/>
<dbReference type="TreeFam" id="TF106366"/>
<dbReference type="Reactome" id="R-MMU-73843">
    <property type="pathway name" value="5-Phosphoribose 1-diphosphate biosynthesis"/>
</dbReference>
<dbReference type="UniPathway" id="UPA00087">
    <property type="reaction ID" value="UER00172"/>
</dbReference>
<dbReference type="BioGRID-ORCS" id="19139">
    <property type="hits" value="2 hits in 76 CRISPR screens"/>
</dbReference>
<dbReference type="CD-CODE" id="CE726F99">
    <property type="entry name" value="Postsynaptic density"/>
</dbReference>
<dbReference type="ChiTaRS" id="Prps1">
    <property type="organism name" value="mouse"/>
</dbReference>
<dbReference type="PRO" id="PR:Q9D7G0"/>
<dbReference type="Proteomes" id="UP000000589">
    <property type="component" value="Chromosome X"/>
</dbReference>
<dbReference type="RNAct" id="Q9D7G0">
    <property type="molecule type" value="protein"/>
</dbReference>
<dbReference type="Bgee" id="ENSMUSG00000031432">
    <property type="expression patterns" value="Expressed in cleaving embryo and 260 other cell types or tissues"/>
</dbReference>
<dbReference type="GO" id="GO:0005829">
    <property type="term" value="C:cytosol"/>
    <property type="evidence" value="ECO:0000314"/>
    <property type="project" value="MGI"/>
</dbReference>
<dbReference type="GO" id="GO:0005524">
    <property type="term" value="F:ATP binding"/>
    <property type="evidence" value="ECO:0000250"/>
    <property type="project" value="UniProtKB"/>
</dbReference>
<dbReference type="GO" id="GO:0016301">
    <property type="term" value="F:kinase activity"/>
    <property type="evidence" value="ECO:0007669"/>
    <property type="project" value="UniProtKB-KW"/>
</dbReference>
<dbReference type="GO" id="GO:0000287">
    <property type="term" value="F:magnesium ion binding"/>
    <property type="evidence" value="ECO:0007669"/>
    <property type="project" value="InterPro"/>
</dbReference>
<dbReference type="GO" id="GO:0042803">
    <property type="term" value="F:protein homodimerization activity"/>
    <property type="evidence" value="ECO:0000250"/>
    <property type="project" value="UniProtKB"/>
</dbReference>
<dbReference type="GO" id="GO:0004749">
    <property type="term" value="F:ribose phosphate diphosphokinase activity"/>
    <property type="evidence" value="ECO:0000314"/>
    <property type="project" value="MGI"/>
</dbReference>
<dbReference type="GO" id="GO:0006015">
    <property type="term" value="P:5-phosphoribose 1-diphosphate biosynthetic process"/>
    <property type="evidence" value="ECO:0000314"/>
    <property type="project" value="MGI"/>
</dbReference>
<dbReference type="GO" id="GO:0009165">
    <property type="term" value="P:nucleotide biosynthetic process"/>
    <property type="evidence" value="ECO:0007669"/>
    <property type="project" value="UniProtKB-KW"/>
</dbReference>
<dbReference type="GO" id="GO:0006098">
    <property type="term" value="P:pentose-phosphate shunt"/>
    <property type="evidence" value="ECO:0000315"/>
    <property type="project" value="MGI"/>
</dbReference>
<dbReference type="GO" id="GO:0009156">
    <property type="term" value="P:ribonucleoside monophosphate biosynthetic process"/>
    <property type="evidence" value="ECO:0007669"/>
    <property type="project" value="InterPro"/>
</dbReference>
<dbReference type="CDD" id="cd06223">
    <property type="entry name" value="PRTases_typeI"/>
    <property type="match status" value="1"/>
</dbReference>
<dbReference type="FunFam" id="3.40.50.2020:FF:000031">
    <property type="entry name" value="Probable PRS4-ribose-phosphate pyrophosphokinase 3"/>
    <property type="match status" value="1"/>
</dbReference>
<dbReference type="FunFam" id="3.40.50.2020:FF:000005">
    <property type="entry name" value="Ribose-phosphate pyrophosphokinase 1"/>
    <property type="match status" value="1"/>
</dbReference>
<dbReference type="Gene3D" id="3.40.50.2020">
    <property type="match status" value="2"/>
</dbReference>
<dbReference type="HAMAP" id="MF_00583_B">
    <property type="entry name" value="RibP_PPkinase_B"/>
    <property type="match status" value="1"/>
</dbReference>
<dbReference type="InterPro" id="IPR000842">
    <property type="entry name" value="PRib_PP_synth_CS"/>
</dbReference>
<dbReference type="InterPro" id="IPR029099">
    <property type="entry name" value="Pribosyltran_N"/>
</dbReference>
<dbReference type="InterPro" id="IPR000836">
    <property type="entry name" value="PRibTrfase_dom"/>
</dbReference>
<dbReference type="InterPro" id="IPR029057">
    <property type="entry name" value="PRTase-like"/>
</dbReference>
<dbReference type="InterPro" id="IPR005946">
    <property type="entry name" value="Rib-P_diPkinase"/>
</dbReference>
<dbReference type="InterPro" id="IPR037515">
    <property type="entry name" value="Rib-P_diPkinase_bac"/>
</dbReference>
<dbReference type="NCBIfam" id="NF002320">
    <property type="entry name" value="PRK01259.1"/>
    <property type="match status" value="1"/>
</dbReference>
<dbReference type="NCBIfam" id="TIGR01251">
    <property type="entry name" value="ribP_PPkin"/>
    <property type="match status" value="1"/>
</dbReference>
<dbReference type="PANTHER" id="PTHR10210">
    <property type="entry name" value="RIBOSE-PHOSPHATE DIPHOSPHOKINASE FAMILY MEMBER"/>
    <property type="match status" value="1"/>
</dbReference>
<dbReference type="PANTHER" id="PTHR10210:SF118">
    <property type="entry name" value="RIBOSE-PHOSPHATE PYROPHOSPHOKINASE 1"/>
    <property type="match status" value="1"/>
</dbReference>
<dbReference type="Pfam" id="PF14572">
    <property type="entry name" value="Pribosyl_synth"/>
    <property type="match status" value="1"/>
</dbReference>
<dbReference type="Pfam" id="PF13793">
    <property type="entry name" value="Pribosyltran_N"/>
    <property type="match status" value="1"/>
</dbReference>
<dbReference type="SMART" id="SM01400">
    <property type="entry name" value="Pribosyltran_N"/>
    <property type="match status" value="1"/>
</dbReference>
<dbReference type="SUPFAM" id="SSF53271">
    <property type="entry name" value="PRTase-like"/>
    <property type="match status" value="1"/>
</dbReference>
<dbReference type="PROSITE" id="PS00114">
    <property type="entry name" value="PRPP_SYNTHASE"/>
    <property type="match status" value="1"/>
</dbReference>
<keyword id="KW-0067">ATP-binding</keyword>
<keyword id="KW-0903">Direct protein sequencing</keyword>
<keyword id="KW-0418">Kinase</keyword>
<keyword id="KW-0460">Magnesium</keyword>
<keyword id="KW-0479">Metal-binding</keyword>
<keyword id="KW-0545">Nucleotide biosynthesis</keyword>
<keyword id="KW-0547">Nucleotide-binding</keyword>
<keyword id="KW-1185">Reference proteome</keyword>
<keyword id="KW-0808">Transferase</keyword>
<reference key="1">
    <citation type="submission" date="1999-03" db="EMBL/GenBank/DDBJ databases">
        <title>Mouse phosphoribosylpyrophosphate synthetase subunit I (PRS I).</title>
        <authorList>
            <person name="Seki N."/>
            <person name="Hattori A."/>
            <person name="Hayashi A."/>
            <person name="Kozuma S."/>
            <person name="Muramatsu M."/>
            <person name="Saito T."/>
        </authorList>
    </citation>
    <scope>NUCLEOTIDE SEQUENCE [MRNA]</scope>
</reference>
<reference key="2">
    <citation type="journal article" date="2005" name="Science">
        <title>The transcriptional landscape of the mammalian genome.</title>
        <authorList>
            <person name="Carninci P."/>
            <person name="Kasukawa T."/>
            <person name="Katayama S."/>
            <person name="Gough J."/>
            <person name="Frith M.C."/>
            <person name="Maeda N."/>
            <person name="Oyama R."/>
            <person name="Ravasi T."/>
            <person name="Lenhard B."/>
            <person name="Wells C."/>
            <person name="Kodzius R."/>
            <person name="Shimokawa K."/>
            <person name="Bajic V.B."/>
            <person name="Brenner S.E."/>
            <person name="Batalov S."/>
            <person name="Forrest A.R."/>
            <person name="Zavolan M."/>
            <person name="Davis M.J."/>
            <person name="Wilming L.G."/>
            <person name="Aidinis V."/>
            <person name="Allen J.E."/>
            <person name="Ambesi-Impiombato A."/>
            <person name="Apweiler R."/>
            <person name="Aturaliya R.N."/>
            <person name="Bailey T.L."/>
            <person name="Bansal M."/>
            <person name="Baxter L."/>
            <person name="Beisel K.W."/>
            <person name="Bersano T."/>
            <person name="Bono H."/>
            <person name="Chalk A.M."/>
            <person name="Chiu K.P."/>
            <person name="Choudhary V."/>
            <person name="Christoffels A."/>
            <person name="Clutterbuck D.R."/>
            <person name="Crowe M.L."/>
            <person name="Dalla E."/>
            <person name="Dalrymple B.P."/>
            <person name="de Bono B."/>
            <person name="Della Gatta G."/>
            <person name="di Bernardo D."/>
            <person name="Down T."/>
            <person name="Engstrom P."/>
            <person name="Fagiolini M."/>
            <person name="Faulkner G."/>
            <person name="Fletcher C.F."/>
            <person name="Fukushima T."/>
            <person name="Furuno M."/>
            <person name="Futaki S."/>
            <person name="Gariboldi M."/>
            <person name="Georgii-Hemming P."/>
            <person name="Gingeras T.R."/>
            <person name="Gojobori T."/>
            <person name="Green R.E."/>
            <person name="Gustincich S."/>
            <person name="Harbers M."/>
            <person name="Hayashi Y."/>
            <person name="Hensch T.K."/>
            <person name="Hirokawa N."/>
            <person name="Hill D."/>
            <person name="Huminiecki L."/>
            <person name="Iacono M."/>
            <person name="Ikeo K."/>
            <person name="Iwama A."/>
            <person name="Ishikawa T."/>
            <person name="Jakt M."/>
            <person name="Kanapin A."/>
            <person name="Katoh M."/>
            <person name="Kawasawa Y."/>
            <person name="Kelso J."/>
            <person name="Kitamura H."/>
            <person name="Kitano H."/>
            <person name="Kollias G."/>
            <person name="Krishnan S.P."/>
            <person name="Kruger A."/>
            <person name="Kummerfeld S.K."/>
            <person name="Kurochkin I.V."/>
            <person name="Lareau L.F."/>
            <person name="Lazarevic D."/>
            <person name="Lipovich L."/>
            <person name="Liu J."/>
            <person name="Liuni S."/>
            <person name="McWilliam S."/>
            <person name="Madan Babu M."/>
            <person name="Madera M."/>
            <person name="Marchionni L."/>
            <person name="Matsuda H."/>
            <person name="Matsuzawa S."/>
            <person name="Miki H."/>
            <person name="Mignone F."/>
            <person name="Miyake S."/>
            <person name="Morris K."/>
            <person name="Mottagui-Tabar S."/>
            <person name="Mulder N."/>
            <person name="Nakano N."/>
            <person name="Nakauchi H."/>
            <person name="Ng P."/>
            <person name="Nilsson R."/>
            <person name="Nishiguchi S."/>
            <person name="Nishikawa S."/>
            <person name="Nori F."/>
            <person name="Ohara O."/>
            <person name="Okazaki Y."/>
            <person name="Orlando V."/>
            <person name="Pang K.C."/>
            <person name="Pavan W.J."/>
            <person name="Pavesi G."/>
            <person name="Pesole G."/>
            <person name="Petrovsky N."/>
            <person name="Piazza S."/>
            <person name="Reed J."/>
            <person name="Reid J.F."/>
            <person name="Ring B.Z."/>
            <person name="Ringwald M."/>
            <person name="Rost B."/>
            <person name="Ruan Y."/>
            <person name="Salzberg S.L."/>
            <person name="Sandelin A."/>
            <person name="Schneider C."/>
            <person name="Schoenbach C."/>
            <person name="Sekiguchi K."/>
            <person name="Semple C.A."/>
            <person name="Seno S."/>
            <person name="Sessa L."/>
            <person name="Sheng Y."/>
            <person name="Shibata Y."/>
            <person name="Shimada H."/>
            <person name="Shimada K."/>
            <person name="Silva D."/>
            <person name="Sinclair B."/>
            <person name="Sperling S."/>
            <person name="Stupka E."/>
            <person name="Sugiura K."/>
            <person name="Sultana R."/>
            <person name="Takenaka Y."/>
            <person name="Taki K."/>
            <person name="Tammoja K."/>
            <person name="Tan S.L."/>
            <person name="Tang S."/>
            <person name="Taylor M.S."/>
            <person name="Tegner J."/>
            <person name="Teichmann S.A."/>
            <person name="Ueda H.R."/>
            <person name="van Nimwegen E."/>
            <person name="Verardo R."/>
            <person name="Wei C.L."/>
            <person name="Yagi K."/>
            <person name="Yamanishi H."/>
            <person name="Zabarovsky E."/>
            <person name="Zhu S."/>
            <person name="Zimmer A."/>
            <person name="Hide W."/>
            <person name="Bult C."/>
            <person name="Grimmond S.M."/>
            <person name="Teasdale R.D."/>
            <person name="Liu E.T."/>
            <person name="Brusic V."/>
            <person name="Quackenbush J."/>
            <person name="Wahlestedt C."/>
            <person name="Mattick J.S."/>
            <person name="Hume D.A."/>
            <person name="Kai C."/>
            <person name="Sasaki D."/>
            <person name="Tomaru Y."/>
            <person name="Fukuda S."/>
            <person name="Kanamori-Katayama M."/>
            <person name="Suzuki M."/>
            <person name="Aoki J."/>
            <person name="Arakawa T."/>
            <person name="Iida J."/>
            <person name="Imamura K."/>
            <person name="Itoh M."/>
            <person name="Kato T."/>
            <person name="Kawaji H."/>
            <person name="Kawagashira N."/>
            <person name="Kawashima T."/>
            <person name="Kojima M."/>
            <person name="Kondo S."/>
            <person name="Konno H."/>
            <person name="Nakano K."/>
            <person name="Ninomiya N."/>
            <person name="Nishio T."/>
            <person name="Okada M."/>
            <person name="Plessy C."/>
            <person name="Shibata K."/>
            <person name="Shiraki T."/>
            <person name="Suzuki S."/>
            <person name="Tagami M."/>
            <person name="Waki K."/>
            <person name="Watahiki A."/>
            <person name="Okamura-Oho Y."/>
            <person name="Suzuki H."/>
            <person name="Kawai J."/>
            <person name="Hayashizaki Y."/>
        </authorList>
    </citation>
    <scope>NUCLEOTIDE SEQUENCE [LARGE SCALE MRNA]</scope>
    <source>
        <strain>C57BL/6J</strain>
        <strain>NOD</strain>
        <tissue>Lung</tissue>
        <tissue>Thymus</tissue>
        <tissue>Tongue</tissue>
    </source>
</reference>
<reference key="3">
    <citation type="journal article" date="2009" name="PLoS Biol.">
        <title>Lineage-specific biology revealed by a finished genome assembly of the mouse.</title>
        <authorList>
            <person name="Church D.M."/>
            <person name="Goodstadt L."/>
            <person name="Hillier L.W."/>
            <person name="Zody M.C."/>
            <person name="Goldstein S."/>
            <person name="She X."/>
            <person name="Bult C.J."/>
            <person name="Agarwala R."/>
            <person name="Cherry J.L."/>
            <person name="DiCuccio M."/>
            <person name="Hlavina W."/>
            <person name="Kapustin Y."/>
            <person name="Meric P."/>
            <person name="Maglott D."/>
            <person name="Birtle Z."/>
            <person name="Marques A.C."/>
            <person name="Graves T."/>
            <person name="Zhou S."/>
            <person name="Teague B."/>
            <person name="Potamousis K."/>
            <person name="Churas C."/>
            <person name="Place M."/>
            <person name="Herschleb J."/>
            <person name="Runnheim R."/>
            <person name="Forrest D."/>
            <person name="Amos-Landgraf J."/>
            <person name="Schwartz D.C."/>
            <person name="Cheng Z."/>
            <person name="Lindblad-Toh K."/>
            <person name="Eichler E.E."/>
            <person name="Ponting C.P."/>
        </authorList>
    </citation>
    <scope>NUCLEOTIDE SEQUENCE [LARGE SCALE GENOMIC DNA]</scope>
    <source>
        <strain>C57BL/6J</strain>
    </source>
</reference>
<reference key="4">
    <citation type="submission" date="2005-07" db="EMBL/GenBank/DDBJ databases">
        <authorList>
            <person name="Mural R.J."/>
            <person name="Adams M.D."/>
            <person name="Myers E.W."/>
            <person name="Smith H.O."/>
            <person name="Venter J.C."/>
        </authorList>
    </citation>
    <scope>NUCLEOTIDE SEQUENCE [LARGE SCALE GENOMIC DNA]</scope>
</reference>
<reference key="5">
    <citation type="journal article" date="2004" name="Genome Res.">
        <title>The status, quality, and expansion of the NIH full-length cDNA project: the Mammalian Gene Collection (MGC).</title>
        <authorList>
            <consortium name="The MGC Project Team"/>
        </authorList>
    </citation>
    <scope>NUCLEOTIDE SEQUENCE [LARGE SCALE MRNA]</scope>
    <source>
        <strain>C57BL/6J</strain>
        <tissue>Brain</tissue>
    </source>
</reference>
<reference key="6">
    <citation type="submission" date="2007-03" db="UniProtKB">
        <authorList>
            <person name="Lubec G."/>
            <person name="Klug S."/>
        </authorList>
    </citation>
    <scope>PROTEIN SEQUENCE OF 35-49; 244-260 AND 303-318</scope>
    <scope>IDENTIFICATION BY MASS SPECTROMETRY</scope>
    <source>
        <tissue>Hippocampus</tissue>
    </source>
</reference>
<reference key="7">
    <citation type="journal article" date="2010" name="Am. J. Hum. Genet.">
        <title>Loss-of-function mutations in the PRPS1 gene cause a type of nonsyndromic X-linked sensorineural deafness, DFN2.</title>
        <authorList>
            <person name="Liu X."/>
            <person name="Han D."/>
            <person name="Li J."/>
            <person name="Han B."/>
            <person name="Ouyang X."/>
            <person name="Cheng J."/>
            <person name="Li X."/>
            <person name="Jin Z."/>
            <person name="Wang Y."/>
            <person name="Bitner-Glindzicz M."/>
            <person name="Kong X."/>
            <person name="Xu H."/>
            <person name="Kantardzhieva A."/>
            <person name="Eavey R.D."/>
            <person name="Seidman C.E."/>
            <person name="Seidman J.G."/>
            <person name="Du L.L."/>
            <person name="Chen Z.Y."/>
            <person name="Dai P."/>
            <person name="Teng M."/>
            <person name="Yan D."/>
            <person name="Yuan H."/>
        </authorList>
    </citation>
    <scope>DEVELOPMENTAL STAGE</scope>
</reference>
<accession>Q9D7G0</accession>
<accession>Q76MX9</accession>
<comment type="function">
    <text>Catalyzes the synthesis of phosphoribosylpyrophosphate (PRPP) that is essential for nucleotide synthesis.</text>
</comment>
<comment type="catalytic activity">
    <reaction>
        <text>D-ribose 5-phosphate + ATP = 5-phospho-alpha-D-ribose 1-diphosphate + AMP + H(+)</text>
        <dbReference type="Rhea" id="RHEA:15609"/>
        <dbReference type="ChEBI" id="CHEBI:15378"/>
        <dbReference type="ChEBI" id="CHEBI:30616"/>
        <dbReference type="ChEBI" id="CHEBI:58017"/>
        <dbReference type="ChEBI" id="CHEBI:78346"/>
        <dbReference type="ChEBI" id="CHEBI:456215"/>
        <dbReference type="EC" id="2.7.6.1"/>
    </reaction>
</comment>
<comment type="cofactor">
    <cofactor evidence="1">
        <name>Mg(2+)</name>
        <dbReference type="ChEBI" id="CHEBI:18420"/>
    </cofactor>
</comment>
<comment type="activity regulation">
    <text>Activated by magnesium and inorganic phosphate.</text>
</comment>
<comment type="pathway">
    <text>Metabolic intermediate biosynthesis; 5-phospho-alpha-D-ribose 1-diphosphate biosynthesis; 5-phospho-alpha-D-ribose 1-diphosphate from D-ribose 5-phosphate (route I): step 1/1.</text>
</comment>
<comment type="subunit">
    <text evidence="1">Homodimer. The active form is probably a hexamer composed of 3 homodimers (By similarity).</text>
</comment>
<comment type="developmental stage">
    <text evidence="3">Expressed in both vestibular and cochlea hair cells in early developing and postnatal mice and can also be detected in the spiral ganglion cells in at post natal day 6.</text>
</comment>
<comment type="similarity">
    <text evidence="4">Belongs to the ribose-phosphate pyrophosphokinase family.</text>
</comment>